<evidence type="ECO:0000250" key="1"/>
<evidence type="ECO:0000255" key="2">
    <source>
        <dbReference type="PROSITE-ProRule" id="PRU00387"/>
    </source>
</evidence>
<evidence type="ECO:0000305" key="3"/>
<gene>
    <name type="primary">etrA</name>
    <name type="ordered locus">SO_2356</name>
</gene>
<feature type="chain" id="PRO_0000100155" description="Electron transport regulator A">
    <location>
        <begin position="1"/>
        <end position="250"/>
    </location>
</feature>
<feature type="domain" description="HTH crp-type" evidence="2">
    <location>
        <begin position="164"/>
        <end position="237"/>
    </location>
</feature>
<feature type="DNA-binding region" description="H-T-H motif" evidence="2">
    <location>
        <begin position="197"/>
        <end position="216"/>
    </location>
</feature>
<feature type="sequence conflict" description="In Ref. 1; AAA71987." evidence="3" ref="1">
    <original>I</original>
    <variation>M</variation>
    <location>
        <position position="30"/>
    </location>
</feature>
<feature type="sequence conflict" description="In Ref. 1; AAA71987." evidence="3" ref="1">
    <original>P</original>
    <variation>L</variation>
    <location>
        <position position="64"/>
    </location>
</feature>
<feature type="sequence conflict" description="In Ref. 1; AAA71987." evidence="3" ref="1">
    <original>R</original>
    <variation>P</variation>
    <location>
        <position position="72"/>
    </location>
</feature>
<keyword id="KW-0238">DNA-binding</keyword>
<keyword id="KW-1185">Reference proteome</keyword>
<keyword id="KW-0804">Transcription</keyword>
<keyword id="KW-0805">Transcription regulation</keyword>
<dbReference type="EMBL" id="L13868">
    <property type="protein sequence ID" value="AAA71987.1"/>
    <property type="molecule type" value="Unassigned_DNA"/>
</dbReference>
<dbReference type="EMBL" id="AE014299">
    <property type="protein sequence ID" value="AAN55390.2"/>
    <property type="molecule type" value="Genomic_DNA"/>
</dbReference>
<dbReference type="PIR" id="A49910">
    <property type="entry name" value="A49910"/>
</dbReference>
<dbReference type="RefSeq" id="NP_717946.2">
    <property type="nucleotide sequence ID" value="NC_004347.2"/>
</dbReference>
<dbReference type="RefSeq" id="WP_011072343.1">
    <property type="nucleotide sequence ID" value="NC_004347.2"/>
</dbReference>
<dbReference type="SMR" id="P46148"/>
<dbReference type="STRING" id="211586.SO_2356"/>
<dbReference type="PaxDb" id="211586-SO_2356"/>
<dbReference type="KEGG" id="son:SO_2356"/>
<dbReference type="PATRIC" id="fig|211586.12.peg.2267"/>
<dbReference type="eggNOG" id="COG0664">
    <property type="taxonomic scope" value="Bacteria"/>
</dbReference>
<dbReference type="HOGENOM" id="CLU_075053_0_2_6"/>
<dbReference type="OrthoDB" id="7643467at2"/>
<dbReference type="PhylomeDB" id="P46148"/>
<dbReference type="BioCyc" id="SONE211586:G1GMP-2154-MONOMER"/>
<dbReference type="Proteomes" id="UP000008186">
    <property type="component" value="Chromosome"/>
</dbReference>
<dbReference type="GO" id="GO:0005829">
    <property type="term" value="C:cytosol"/>
    <property type="evidence" value="ECO:0000318"/>
    <property type="project" value="GO_Central"/>
</dbReference>
<dbReference type="GO" id="GO:0003677">
    <property type="term" value="F:DNA binding"/>
    <property type="evidence" value="ECO:0007669"/>
    <property type="project" value="UniProtKB-KW"/>
</dbReference>
<dbReference type="GO" id="GO:0003700">
    <property type="term" value="F:DNA-binding transcription factor activity"/>
    <property type="evidence" value="ECO:0000315"/>
    <property type="project" value="TIGR"/>
</dbReference>
<dbReference type="GO" id="GO:0009061">
    <property type="term" value="P:anaerobic respiration"/>
    <property type="evidence" value="ECO:0000315"/>
    <property type="project" value="TIGR"/>
</dbReference>
<dbReference type="GO" id="GO:0006355">
    <property type="term" value="P:regulation of DNA-templated transcription"/>
    <property type="evidence" value="ECO:0000315"/>
    <property type="project" value="TIGR"/>
</dbReference>
<dbReference type="CDD" id="cd00038">
    <property type="entry name" value="CAP_ED"/>
    <property type="match status" value="1"/>
</dbReference>
<dbReference type="CDD" id="cd00092">
    <property type="entry name" value="HTH_CRP"/>
    <property type="match status" value="1"/>
</dbReference>
<dbReference type="FunFam" id="1.10.10.10:FF:000028">
    <property type="entry name" value="Fumarate/nitrate reduction transcriptional regulator Fnr"/>
    <property type="match status" value="1"/>
</dbReference>
<dbReference type="FunFam" id="2.60.120.10:FF:000004">
    <property type="entry name" value="Fumarate/nitrate reduction transcriptional regulator Fnr"/>
    <property type="match status" value="1"/>
</dbReference>
<dbReference type="Gene3D" id="2.60.120.10">
    <property type="entry name" value="Jelly Rolls"/>
    <property type="match status" value="1"/>
</dbReference>
<dbReference type="Gene3D" id="1.10.10.10">
    <property type="entry name" value="Winged helix-like DNA-binding domain superfamily/Winged helix DNA-binding domain"/>
    <property type="match status" value="1"/>
</dbReference>
<dbReference type="InterPro" id="IPR000595">
    <property type="entry name" value="cNMP-bd_dom"/>
</dbReference>
<dbReference type="InterPro" id="IPR018490">
    <property type="entry name" value="cNMP-bd_dom_sf"/>
</dbReference>
<dbReference type="InterPro" id="IPR050397">
    <property type="entry name" value="Env_Response_Regulators"/>
</dbReference>
<dbReference type="InterPro" id="IPR012318">
    <property type="entry name" value="HTH_CRP"/>
</dbReference>
<dbReference type="InterPro" id="IPR014710">
    <property type="entry name" value="RmlC-like_jellyroll"/>
</dbReference>
<dbReference type="InterPro" id="IPR018335">
    <property type="entry name" value="Tscrpt_reg_HTH_Crp-type_CS"/>
</dbReference>
<dbReference type="InterPro" id="IPR036388">
    <property type="entry name" value="WH-like_DNA-bd_sf"/>
</dbReference>
<dbReference type="InterPro" id="IPR036390">
    <property type="entry name" value="WH_DNA-bd_sf"/>
</dbReference>
<dbReference type="NCBIfam" id="NF008365">
    <property type="entry name" value="PRK11161.1"/>
    <property type="match status" value="1"/>
</dbReference>
<dbReference type="PANTHER" id="PTHR24567">
    <property type="entry name" value="CRP FAMILY TRANSCRIPTIONAL REGULATORY PROTEIN"/>
    <property type="match status" value="1"/>
</dbReference>
<dbReference type="PANTHER" id="PTHR24567:SF75">
    <property type="entry name" value="FUMARATE AND NITRATE REDUCTION REGULATORY PROTEIN"/>
    <property type="match status" value="1"/>
</dbReference>
<dbReference type="Pfam" id="PF00027">
    <property type="entry name" value="cNMP_binding"/>
    <property type="match status" value="1"/>
</dbReference>
<dbReference type="Pfam" id="PF13545">
    <property type="entry name" value="HTH_Crp_2"/>
    <property type="match status" value="1"/>
</dbReference>
<dbReference type="PRINTS" id="PR00034">
    <property type="entry name" value="HTHCRP"/>
</dbReference>
<dbReference type="SMART" id="SM00100">
    <property type="entry name" value="cNMP"/>
    <property type="match status" value="1"/>
</dbReference>
<dbReference type="SMART" id="SM00419">
    <property type="entry name" value="HTH_CRP"/>
    <property type="match status" value="1"/>
</dbReference>
<dbReference type="SUPFAM" id="SSF51206">
    <property type="entry name" value="cAMP-binding domain-like"/>
    <property type="match status" value="1"/>
</dbReference>
<dbReference type="SUPFAM" id="SSF46785">
    <property type="entry name" value="Winged helix' DNA-binding domain"/>
    <property type="match status" value="1"/>
</dbReference>
<dbReference type="PROSITE" id="PS50042">
    <property type="entry name" value="CNMP_BINDING_3"/>
    <property type="match status" value="1"/>
</dbReference>
<dbReference type="PROSITE" id="PS00042">
    <property type="entry name" value="HTH_CRP_1"/>
    <property type="match status" value="1"/>
</dbReference>
<dbReference type="PROSITE" id="PS51063">
    <property type="entry name" value="HTH_CRP_2"/>
    <property type="match status" value="1"/>
</dbReference>
<proteinExistence type="inferred from homology"/>
<organism>
    <name type="scientific">Shewanella oneidensis (strain ATCC 700550 / JCM 31522 / CIP 106686 / LMG 19005 / NCIMB 14063 / MR-1)</name>
    <dbReference type="NCBI Taxonomy" id="211586"/>
    <lineage>
        <taxon>Bacteria</taxon>
        <taxon>Pseudomonadati</taxon>
        <taxon>Pseudomonadota</taxon>
        <taxon>Gammaproteobacteria</taxon>
        <taxon>Alteromonadales</taxon>
        <taxon>Shewanellaceae</taxon>
        <taxon>Shewanella</taxon>
    </lineage>
</organism>
<reference key="1">
    <citation type="journal article" date="1993" name="J. Bacteriol.">
        <title>Sequence and genetic characterization of etrA, an fnr analog that regulates anaerobic respiration in Shewanella putrefaciens MR-1.</title>
        <authorList>
            <person name="Saffarini D.A."/>
            <person name="Nealson K.H."/>
        </authorList>
    </citation>
    <scope>NUCLEOTIDE SEQUENCE [GENOMIC DNA]</scope>
    <source>
        <strain>ATCC 700550 / JCM 31522 / CIP 106686 / LMG 19005 / NCIMB 14063 / MR-1</strain>
    </source>
</reference>
<reference key="2">
    <citation type="journal article" date="2002" name="Nat. Biotechnol.">
        <title>Genome sequence of the dissimilatory metal ion-reducing bacterium Shewanella oneidensis.</title>
        <authorList>
            <person name="Heidelberg J.F."/>
            <person name="Paulsen I.T."/>
            <person name="Nelson K.E."/>
            <person name="Gaidos E.J."/>
            <person name="Nelson W.C."/>
            <person name="Read T.D."/>
            <person name="Eisen J.A."/>
            <person name="Seshadri R."/>
            <person name="Ward N.L."/>
            <person name="Methe B.A."/>
            <person name="Clayton R.A."/>
            <person name="Meyer T."/>
            <person name="Tsapin A."/>
            <person name="Scott J."/>
            <person name="Beanan M.J."/>
            <person name="Brinkac L.M."/>
            <person name="Daugherty S.C."/>
            <person name="DeBoy R.T."/>
            <person name="Dodson R.J."/>
            <person name="Durkin A.S."/>
            <person name="Haft D.H."/>
            <person name="Kolonay J.F."/>
            <person name="Madupu R."/>
            <person name="Peterson J.D."/>
            <person name="Umayam L.A."/>
            <person name="White O."/>
            <person name="Wolf A.M."/>
            <person name="Vamathevan J.J."/>
            <person name="Weidman J.F."/>
            <person name="Impraim M."/>
            <person name="Lee K."/>
            <person name="Berry K.J."/>
            <person name="Lee C."/>
            <person name="Mueller J."/>
            <person name="Khouri H.M."/>
            <person name="Gill J."/>
            <person name="Utterback T.R."/>
            <person name="McDonald L.A."/>
            <person name="Feldblyum T.V."/>
            <person name="Smith H.O."/>
            <person name="Venter J.C."/>
            <person name="Nealson K.H."/>
            <person name="Fraser C.M."/>
        </authorList>
    </citation>
    <scope>NUCLEOTIDE SEQUENCE [LARGE SCALE GENOMIC DNA]</scope>
    <source>
        <strain>ATCC 700550 / JCM 31522 / CIP 106686 / LMG 19005 / NCIMB 14063 / MR-1</strain>
    </source>
</reference>
<name>ETRA_SHEON</name>
<sequence>MTIEQNKNRRSAASGCAIHCHDCSMGTLCIPFTLNANELDQLDDIIERKKPIQKGEQIFKSGDPLKSLFAIRSGTIKSYTITEQGDEQITGFHLAGDVIGFDGIHAQSHQSFAQALETSMVCEIPFNILDELSGTMPKLRQQIMRLMSNEIMSDQEMILLLSKKNAEERLAAFISNLANRFGNRGFSAKEFRLTMTRGDIGNYLGLTVETISRLLGRFQKSGLIEVKGKYIIIVDHHELNLLAGNARIAR</sequence>
<comment type="function">
    <text>Regulates anaerobic growth on fumarate, nitrite, Fe(3+), TMAO, DMSO, thiosulfate and sulfite, but not on nitrate nor Mn(4+).</text>
</comment>
<comment type="subunit">
    <text evidence="1">Monomer.</text>
</comment>
<comment type="miscellaneous">
    <text>Possesses 4 cysteines which may bind a metal ion (possibly iron).</text>
</comment>
<protein>
    <recommendedName>
        <fullName>Electron transport regulator A</fullName>
    </recommendedName>
</protein>
<accession>P46148</accession>